<keyword id="KW-0002">3D-structure</keyword>
<keyword id="KW-0025">Alternative splicing</keyword>
<keyword id="KW-0238">DNA-binding</keyword>
<keyword id="KW-0479">Metal-binding</keyword>
<keyword id="KW-0520">NAD</keyword>
<keyword id="KW-1185">Reference proteome</keyword>
<keyword id="KW-0678">Repressor</keyword>
<keyword id="KW-0804">Transcription</keyword>
<keyword id="KW-0805">Transcription regulation</keyword>
<keyword id="KW-0862">Zinc</keyword>
<keyword id="KW-0863">Zinc-finger</keyword>
<dbReference type="EMBL" id="FO081427">
    <property type="protein sequence ID" value="CCD71569.1"/>
    <property type="molecule type" value="Genomic_DNA"/>
</dbReference>
<dbReference type="EMBL" id="FO081427">
    <property type="protein sequence ID" value="CCG28183.1"/>
    <property type="molecule type" value="Genomic_DNA"/>
</dbReference>
<dbReference type="PIR" id="T34289">
    <property type="entry name" value="T34289"/>
</dbReference>
<dbReference type="RefSeq" id="NP_001257030.1">
    <molecule id="Q20595-1"/>
    <property type="nucleotide sequence ID" value="NM_001270101.4"/>
</dbReference>
<dbReference type="RefSeq" id="NP_001257031.1">
    <molecule id="Q20595-2"/>
    <property type="nucleotide sequence ID" value="NM_001270102.3"/>
</dbReference>
<dbReference type="PDB" id="2JM3">
    <property type="method" value="NMR"/>
    <property type="chains" value="A=1-89"/>
</dbReference>
<dbReference type="PDBsum" id="2JM3"/>
<dbReference type="SMR" id="Q20595"/>
<dbReference type="BioGRID" id="45786">
    <property type="interactions" value="1"/>
</dbReference>
<dbReference type="FunCoup" id="Q20595">
    <property type="interactions" value="281"/>
</dbReference>
<dbReference type="STRING" id="6239.F49E10.5a.1"/>
<dbReference type="PaxDb" id="6239-F49E10.5a"/>
<dbReference type="PeptideAtlas" id="Q20595"/>
<dbReference type="EnsemblMetazoa" id="F49E10.5a.1">
    <molecule id="Q20595-1"/>
    <property type="protein sequence ID" value="F49E10.5a.1"/>
    <property type="gene ID" value="WBGene00006424"/>
</dbReference>
<dbReference type="EnsemblMetazoa" id="F49E10.5b.1">
    <molecule id="Q20595-2"/>
    <property type="protein sequence ID" value="F49E10.5b.1"/>
    <property type="gene ID" value="WBGene00006424"/>
</dbReference>
<dbReference type="GeneID" id="180853"/>
<dbReference type="KEGG" id="cel:CELE_F49E10.5"/>
<dbReference type="UCSC" id="F49E10.5">
    <molecule id="Q20595-1"/>
    <property type="organism name" value="c. elegans"/>
</dbReference>
<dbReference type="AGR" id="WB:WBGene00006424"/>
<dbReference type="CTD" id="180853"/>
<dbReference type="WormBase" id="F49E10.5a">
    <molecule id="Q20595-1"/>
    <property type="protein sequence ID" value="CE29966"/>
    <property type="gene ID" value="WBGene00006424"/>
    <property type="gene designation" value="ctbp-1"/>
</dbReference>
<dbReference type="WormBase" id="F49E10.5b">
    <molecule id="Q20595-2"/>
    <property type="protein sequence ID" value="CE47412"/>
    <property type="gene ID" value="WBGene00006424"/>
    <property type="gene designation" value="ctbp-1"/>
</dbReference>
<dbReference type="eggNOG" id="KOG0067">
    <property type="taxonomic scope" value="Eukaryota"/>
</dbReference>
<dbReference type="GeneTree" id="ENSGT00940000171573"/>
<dbReference type="HOGENOM" id="CLU_016243_0_0_1"/>
<dbReference type="InParanoid" id="Q20595"/>
<dbReference type="OMA" id="IAVCHAP"/>
<dbReference type="OrthoDB" id="9991913at2759"/>
<dbReference type="PhylomeDB" id="Q20595"/>
<dbReference type="Reactome" id="R-CEL-3769402">
    <property type="pathway name" value="Deactivation of the beta-catenin transactivating complex"/>
</dbReference>
<dbReference type="Reactome" id="R-CEL-4641265">
    <property type="pathway name" value="Repression of WNT target genes"/>
</dbReference>
<dbReference type="EvolutionaryTrace" id="Q20595"/>
<dbReference type="PRO" id="PR:Q20595"/>
<dbReference type="Proteomes" id="UP000001940">
    <property type="component" value="Chromosome X"/>
</dbReference>
<dbReference type="Bgee" id="WBGene00006424">
    <property type="expression patterns" value="Expressed in pharyngeal muscle cell (C elegans) and 3 other cell types or tissues"/>
</dbReference>
<dbReference type="GO" id="GO:0005634">
    <property type="term" value="C:nucleus"/>
    <property type="evidence" value="ECO:0000314"/>
    <property type="project" value="WormBase"/>
</dbReference>
<dbReference type="GO" id="GO:0003677">
    <property type="term" value="F:DNA binding"/>
    <property type="evidence" value="ECO:0007669"/>
    <property type="project" value="UniProtKB-KW"/>
</dbReference>
<dbReference type="GO" id="GO:0140297">
    <property type="term" value="F:DNA-binding transcription factor binding"/>
    <property type="evidence" value="ECO:0000318"/>
    <property type="project" value="GO_Central"/>
</dbReference>
<dbReference type="GO" id="GO:0051287">
    <property type="term" value="F:NAD binding"/>
    <property type="evidence" value="ECO:0007669"/>
    <property type="project" value="InterPro"/>
</dbReference>
<dbReference type="GO" id="GO:0016616">
    <property type="term" value="F:oxidoreductase activity, acting on the CH-OH group of donors, NAD or NADP as acceptor"/>
    <property type="evidence" value="ECO:0007669"/>
    <property type="project" value="InterPro"/>
</dbReference>
<dbReference type="GO" id="GO:0061629">
    <property type="term" value="F:RNA polymerase II-specific DNA-binding transcription factor binding"/>
    <property type="evidence" value="ECO:0000353"/>
    <property type="project" value="WormBase"/>
</dbReference>
<dbReference type="GO" id="GO:0003713">
    <property type="term" value="F:transcription coactivator activity"/>
    <property type="evidence" value="ECO:0000318"/>
    <property type="project" value="GO_Central"/>
</dbReference>
<dbReference type="GO" id="GO:0001221">
    <property type="term" value="F:transcription coregulator binding"/>
    <property type="evidence" value="ECO:0000318"/>
    <property type="project" value="GO_Central"/>
</dbReference>
<dbReference type="GO" id="GO:0003714">
    <property type="term" value="F:transcription corepressor activity"/>
    <property type="evidence" value="ECO:0000314"/>
    <property type="project" value="WormBase"/>
</dbReference>
<dbReference type="GO" id="GO:0008270">
    <property type="term" value="F:zinc ion binding"/>
    <property type="evidence" value="ECO:0007669"/>
    <property type="project" value="UniProtKB-KW"/>
</dbReference>
<dbReference type="GO" id="GO:0000122">
    <property type="term" value="P:negative regulation of transcription by RNA polymerase II"/>
    <property type="evidence" value="ECO:0000314"/>
    <property type="project" value="WormBase"/>
</dbReference>
<dbReference type="GO" id="GO:0006357">
    <property type="term" value="P:regulation of transcription by RNA polymerase II"/>
    <property type="evidence" value="ECO:0000318"/>
    <property type="project" value="GO_Central"/>
</dbReference>
<dbReference type="CDD" id="cd05299">
    <property type="entry name" value="CtBP_dh"/>
    <property type="match status" value="1"/>
</dbReference>
<dbReference type="Gene3D" id="3.40.50.720">
    <property type="entry name" value="NAD(P)-binding Rossmann-like Domain"/>
    <property type="match status" value="2"/>
</dbReference>
<dbReference type="InterPro" id="IPR043322">
    <property type="entry name" value="CtBP"/>
</dbReference>
<dbReference type="InterPro" id="IPR051638">
    <property type="entry name" value="CTBP_dehydrogenase"/>
</dbReference>
<dbReference type="InterPro" id="IPR006139">
    <property type="entry name" value="D-isomer_2_OHA_DH_cat_dom"/>
</dbReference>
<dbReference type="InterPro" id="IPR029752">
    <property type="entry name" value="D-isomer_DH_CS1"/>
</dbReference>
<dbReference type="InterPro" id="IPR006140">
    <property type="entry name" value="D-isomer_DH_NAD-bd"/>
</dbReference>
<dbReference type="InterPro" id="IPR036291">
    <property type="entry name" value="NAD(P)-bd_dom_sf"/>
</dbReference>
<dbReference type="InterPro" id="IPR006612">
    <property type="entry name" value="THAP_Znf"/>
</dbReference>
<dbReference type="PANTHER" id="PTHR46029">
    <property type="entry name" value="C-TERMINAL-BINDING PROTEIN"/>
    <property type="match status" value="1"/>
</dbReference>
<dbReference type="PANTHER" id="PTHR46029:SF7">
    <property type="entry name" value="C-TERMINAL-BINDING PROTEIN"/>
    <property type="match status" value="1"/>
</dbReference>
<dbReference type="Pfam" id="PF00389">
    <property type="entry name" value="2-Hacid_dh"/>
    <property type="match status" value="1"/>
</dbReference>
<dbReference type="Pfam" id="PF02826">
    <property type="entry name" value="2-Hacid_dh_C"/>
    <property type="match status" value="1"/>
</dbReference>
<dbReference type="Pfam" id="PF05485">
    <property type="entry name" value="THAP"/>
    <property type="match status" value="1"/>
</dbReference>
<dbReference type="SMART" id="SM00980">
    <property type="entry name" value="THAP"/>
    <property type="match status" value="1"/>
</dbReference>
<dbReference type="SUPFAM" id="SSF52283">
    <property type="entry name" value="Formate/glycerate dehydrogenase catalytic domain-like"/>
    <property type="match status" value="1"/>
</dbReference>
<dbReference type="SUPFAM" id="SSF57716">
    <property type="entry name" value="Glucocorticoid receptor-like (DNA-binding domain)"/>
    <property type="match status" value="1"/>
</dbReference>
<dbReference type="SUPFAM" id="SSF51735">
    <property type="entry name" value="NAD(P)-binding Rossmann-fold domains"/>
    <property type="match status" value="1"/>
</dbReference>
<dbReference type="PROSITE" id="PS00065">
    <property type="entry name" value="D_2_HYDROXYACID_DH_1"/>
    <property type="match status" value="1"/>
</dbReference>
<dbReference type="PROSITE" id="PS50950">
    <property type="entry name" value="ZF_THAP"/>
    <property type="match status" value="1"/>
</dbReference>
<evidence type="ECO:0000250" key="1">
    <source>
        <dbReference type="UniProtKB" id="P56545"/>
    </source>
</evidence>
<evidence type="ECO:0000255" key="2"/>
<evidence type="ECO:0000255" key="3">
    <source>
        <dbReference type="PROSITE-ProRule" id="PRU00309"/>
    </source>
</evidence>
<evidence type="ECO:0000256" key="4">
    <source>
        <dbReference type="SAM" id="MobiDB-lite"/>
    </source>
</evidence>
<evidence type="ECO:0000269" key="5">
    <source>
    </source>
</evidence>
<evidence type="ECO:0000269" key="6">
    <source>
    </source>
</evidence>
<evidence type="ECO:0000269" key="7">
    <source>
    </source>
</evidence>
<evidence type="ECO:0000269" key="8">
    <source>
    </source>
</evidence>
<evidence type="ECO:0000303" key="9">
    <source>
    </source>
</evidence>
<evidence type="ECO:0000303" key="10">
    <source>
    </source>
</evidence>
<evidence type="ECO:0000305" key="11"/>
<evidence type="ECO:0000312" key="12">
    <source>
        <dbReference type="EMBL" id="CCD71569.1"/>
    </source>
</evidence>
<evidence type="ECO:0000312" key="13">
    <source>
        <dbReference type="PDB" id="2JM3"/>
    </source>
</evidence>
<evidence type="ECO:0000312" key="14">
    <source>
        <dbReference type="WormBase" id="F49E10.5a"/>
    </source>
</evidence>
<evidence type="ECO:0007829" key="15">
    <source>
        <dbReference type="PDB" id="2JM3"/>
    </source>
</evidence>
<protein>
    <recommendedName>
        <fullName evidence="9">C-terminal-binding protein 1</fullName>
    </recommendedName>
</protein>
<sequence length="727" mass="79598">MPTTCGFPNCKFRSRYRGLEDNRHFYRIPKRPLILRQRWLTAIGRTEETVVSQLRICSAHFEGGEKKEGDIPVPDPTVDKQIKIELPPKESKNSDRRRKQNIPARFPRPESPSGDSPSYSKKSRSFRDFYPSLSSTPSFDPAQSPHTPHPPVLPDPQQALNDILSMTSTRMNGPSSSRPLVALLDGRDCSVEMPILKDVATVAFCDAQSTQEIHEKVLNEAVAALMYHSIKLEKEDLEKFKVLKVVFRIGYGIDNIDVKAATELGIAVCHAPGDYVEDVADSTLSLILDLFRRTYWHAKSYSETRKTIGADQVRENAVGSKKVRGSVLGILGCGRVGTAVGLRARAFGLHIIFYDPFVREGHDKALGFERVYTMDEFMSRSDCISLHCNLGDETRGIINADSLRQCKSGVYIVNTSHAGLINENDLAAALKNGHVKGAALDVHDSVRFDPNCLNPLVGCPNIINTPHSAWMTEASCKDLRINAAKEIRKAINGRCPQDLTHCINKEAVMRNSNPINRRTSSAHPLLNMGFPTLPNFPPMSMSPHFPYPNPLLAMGAQMGALNPFMGNGALPFNPAAALSSLAAAQAANAQRGSPANRSSRSSPSPHTNKSSVSPGNNGHVKTEPSSPAAKIEVDIAENDKHSMMTFLQRLIAPNGDSGASTADSGIEGGDKEKVQSDGDENMEDMEVIDAEKLKEELNIGQLEEPEEISVGLNNGNRINIDEQPLAT</sequence>
<reference evidence="12" key="1">
    <citation type="journal article" date="1998" name="Science">
        <title>Genome sequence of the nematode C. elegans: a platform for investigating biology.</title>
        <authorList>
            <consortium name="The C. elegans sequencing consortium"/>
        </authorList>
    </citation>
    <scope>NUCLEOTIDE SEQUENCE [LARGE SCALE GENOMIC DNA]</scope>
    <source>
        <strain evidence="12">Bristol N2</strain>
    </source>
</reference>
<reference evidence="11" key="2">
    <citation type="journal article" date="2008" name="J. Mol. Biol.">
        <title>The Caenorhabditis elegans protein CTBP-1 defines a new group of THAP domain-containing CtBP corepressors.</title>
        <authorList>
            <person name="Nicholas H.R."/>
            <person name="Lowry J.A."/>
            <person name="Wu T."/>
            <person name="Crossley M."/>
        </authorList>
    </citation>
    <scope>FUNCTION</scope>
    <scope>SUBUNIT</scope>
    <scope>DOMAIN</scope>
</reference>
<reference evidence="11" key="3">
    <citation type="journal article" date="2009" name="Proc. Natl. Acad. Sci. U.S.A.">
        <title>The conserved NAD(H)-dependent corepressor CTBP-1 regulates Caenorhabditis elegans life span.</title>
        <authorList>
            <person name="Chen S."/>
            <person name="Whetstine J.R."/>
            <person name="Ghosh S."/>
            <person name="Hanover J.A."/>
            <person name="Gali R.R."/>
            <person name="Grosu P."/>
            <person name="Shi Y."/>
        </authorList>
    </citation>
    <scope>FUNCTION</scope>
    <scope>DISRUPTION PHENOTYPE</scope>
    <scope>MUTAGENESIS OF GLY-332; GLY-334 AND HIS-467</scope>
</reference>
<reference evidence="11 13" key="4">
    <citation type="journal article" date="2007" name="J. Mol. Biol.">
        <title>Solution structure of the THAP domain from Caenorhabditis elegans C-terminal binding protein (CtBP).</title>
        <authorList>
            <person name="Liew C.K."/>
            <person name="Crossley M."/>
            <person name="Mackay J.P."/>
            <person name="Nicholas H.R."/>
        </authorList>
    </citation>
    <scope>STRUCTURE BY NMR OF 1-89 IN COMPLEX WITH ZINC</scope>
    <scope>DOMAIN</scope>
    <scope>DNA-BINDING</scope>
</reference>
<proteinExistence type="evidence at protein level"/>
<gene>
    <name evidence="12 14" type="primary">ctbp-1</name>
    <name type="ORF">F49E10.5</name>
</gene>
<organism>
    <name type="scientific">Caenorhabditis elegans</name>
    <dbReference type="NCBI Taxonomy" id="6239"/>
    <lineage>
        <taxon>Eukaryota</taxon>
        <taxon>Metazoa</taxon>
        <taxon>Ecdysozoa</taxon>
        <taxon>Nematoda</taxon>
        <taxon>Chromadorea</taxon>
        <taxon>Rhabditida</taxon>
        <taxon>Rhabditina</taxon>
        <taxon>Rhabditomorpha</taxon>
        <taxon>Rhabditoidea</taxon>
        <taxon>Rhabditidae</taxon>
        <taxon>Peloderinae</taxon>
        <taxon>Caenorhabditis</taxon>
    </lineage>
</organism>
<accession>Q20595</accession>
<accession>H8W3Z5</accession>
<accession>Q20596</accession>
<feature type="chain" id="PRO_0000424056" description="C-terminal-binding protein 1">
    <location>
        <begin position="1"/>
        <end position="727"/>
    </location>
</feature>
<feature type="zinc finger region" description="THAP-type" evidence="3">
    <location>
        <begin position="5"/>
        <end position="60"/>
    </location>
</feature>
<feature type="region of interest" description="Disordered" evidence="4">
    <location>
        <begin position="64"/>
        <end position="158"/>
    </location>
</feature>
<feature type="region of interest" description="Disordered" evidence="4">
    <location>
        <begin position="587"/>
        <end position="629"/>
    </location>
</feature>
<feature type="region of interest" description="Disordered" evidence="4">
    <location>
        <begin position="652"/>
        <end position="681"/>
    </location>
</feature>
<feature type="compositionally biased region" description="Basic and acidic residues" evidence="4">
    <location>
        <begin position="77"/>
        <end position="94"/>
    </location>
</feature>
<feature type="compositionally biased region" description="Low complexity" evidence="4">
    <location>
        <begin position="587"/>
        <end position="613"/>
    </location>
</feature>
<feature type="binding site" evidence="1">
    <location>
        <position position="251"/>
    </location>
    <ligand>
        <name>NAD(+)</name>
        <dbReference type="ChEBI" id="CHEBI:57540"/>
    </ligand>
</feature>
<feature type="binding site" evidence="1">
    <location>
        <begin position="331"/>
        <end position="336"/>
    </location>
    <ligand>
        <name>NAD(+)</name>
        <dbReference type="ChEBI" id="CHEBI:57540"/>
    </ligand>
</feature>
<feature type="binding site" evidence="1">
    <location>
        <position position="355"/>
    </location>
    <ligand>
        <name>NAD(+)</name>
        <dbReference type="ChEBI" id="CHEBI:57540"/>
    </ligand>
</feature>
<feature type="binding site" evidence="1">
    <location>
        <begin position="388"/>
        <end position="394"/>
    </location>
    <ligand>
        <name>NAD(+)</name>
        <dbReference type="ChEBI" id="CHEBI:57540"/>
    </ligand>
</feature>
<feature type="binding site" evidence="1">
    <location>
        <begin position="415"/>
        <end position="417"/>
    </location>
    <ligand>
        <name>NAD(+)</name>
        <dbReference type="ChEBI" id="CHEBI:57540"/>
    </ligand>
</feature>
<feature type="binding site" evidence="1">
    <location>
        <position position="441"/>
    </location>
    <ligand>
        <name>NAD(+)</name>
        <dbReference type="ChEBI" id="CHEBI:57540"/>
    </ligand>
</feature>
<feature type="binding site" evidence="1">
    <location>
        <begin position="467"/>
        <end position="470"/>
    </location>
    <ligand>
        <name>NAD(+)</name>
        <dbReference type="ChEBI" id="CHEBI:57540"/>
    </ligand>
</feature>
<feature type="splice variant" id="VSP_053308" description="In isoform b." evidence="10">
    <location>
        <begin position="1"/>
        <end position="121"/>
    </location>
</feature>
<feature type="splice variant" id="VSP_053309" description="In isoform b." evidence="10">
    <original>KSRSFRDFYPSLSSTPSFD</original>
    <variation>MGGEANGTKPTGSQKRKRN</variation>
    <location>
        <begin position="122"/>
        <end position="140"/>
    </location>
</feature>
<feature type="mutagenesis site" description="Does not rescue the extended lifespan phenotype observed in ctbp-1 deletion mutants." evidence="7">
    <original>G</original>
    <variation>V</variation>
    <location>
        <position position="332"/>
    </location>
</feature>
<feature type="mutagenesis site" description="Does not rescue the extended lifespan phenotype observed in ctbp-1 deletion mutants." evidence="7">
    <original>G</original>
    <variation>V</variation>
    <location>
        <position position="334"/>
    </location>
</feature>
<feature type="mutagenesis site" description="Rescues the extended lifespan phenotype observed in ctbp-1 deletion mutants." evidence="7">
    <original>H</original>
    <variation>A</variation>
    <location>
        <position position="467"/>
    </location>
</feature>
<feature type="turn" evidence="15">
    <location>
        <begin position="13"/>
        <end position="15"/>
    </location>
</feature>
<feature type="strand" evidence="15">
    <location>
        <begin position="16"/>
        <end position="18"/>
    </location>
</feature>
<feature type="helix" evidence="15">
    <location>
        <begin position="33"/>
        <end position="43"/>
    </location>
</feature>
<feature type="helix" evidence="15">
    <location>
        <begin position="47"/>
        <end position="49"/>
    </location>
</feature>
<feature type="strand" evidence="15">
    <location>
        <begin position="50"/>
        <end position="53"/>
    </location>
</feature>
<feature type="helix" evidence="15">
    <location>
        <begin position="58"/>
        <end position="60"/>
    </location>
</feature>
<feature type="strand" evidence="15">
    <location>
        <begin position="67"/>
        <end position="70"/>
    </location>
</feature>
<feature type="turn" evidence="15">
    <location>
        <begin position="76"/>
        <end position="78"/>
    </location>
</feature>
<comment type="function">
    <text evidence="6 7">Binds DNA and represses gene expression. Plays a role in regulation of life span, possibly by regulating transcription of genes important for lipid metabolism.</text>
</comment>
<comment type="subunit">
    <text evidence="5 6">Homodimer.</text>
</comment>
<comment type="alternative products">
    <event type="alternative splicing"/>
    <isoform>
        <id>Q20595-1</id>
        <name evidence="8">a</name>
        <sequence type="displayed"/>
    </isoform>
    <isoform>
        <id>Q20595-2</id>
        <name evidence="8">b</name>
        <sequence type="described" ref="VSP_053308 VSP_053309"/>
    </isoform>
</comment>
<comment type="domain">
    <text evidence="5 6">The THAP-type zinc finger mediates DNA-binding but is not required for repression of gene expression.</text>
</comment>
<comment type="disruption phenotype">
    <text evidence="7">Adult life span extension and increased resistance to oxidative and heat stress but not to DNA damage, starvation or pathogen stress.</text>
</comment>
<comment type="similarity">
    <text evidence="2">Belongs to the D-isomer specific 2-hydroxyacid dehydrogenase family.</text>
</comment>
<comment type="caution">
    <text evidence="11">In contrast to other members of the family, lacks the conserved Arg and Glu active sites at positions 417 and 446 respectively, suggesting that it lacks dehydrogenase activity.</text>
</comment>
<name>CTBP1_CAEEL</name>